<sequence length="157" mass="17759">MSLLIDIVDETGSVSEEMLKEVENLLQFAAEREGVQDQAEVSVTIVSNDDIHQINKEYRGKDAPTDVISFALEEEGEGEIEIVGAEMPPVLGDIIISADRTREQAEEYNHSFKRELGFLAVHGFLHLLGYDHMTKEEEEEMFTKQKELLDAYGLKRS</sequence>
<gene>
    <name evidence="1" type="primary">ybeY</name>
    <name type="synonym">yqfG</name>
    <name type="ordered locus">BSU25320</name>
</gene>
<feature type="chain" id="PRO_0000102411" description="Endoribonuclease YbeY">
    <location>
        <begin position="1"/>
        <end position="157"/>
    </location>
</feature>
<feature type="binding site" evidence="1">
    <location>
        <position position="122"/>
    </location>
    <ligand>
        <name>Zn(2+)</name>
        <dbReference type="ChEBI" id="CHEBI:29105"/>
        <note>catalytic</note>
    </ligand>
</feature>
<feature type="binding site" evidence="1">
    <location>
        <position position="126"/>
    </location>
    <ligand>
        <name>Zn(2+)</name>
        <dbReference type="ChEBI" id="CHEBI:29105"/>
        <note>catalytic</note>
    </ligand>
</feature>
<feature type="binding site" evidence="1">
    <location>
        <position position="132"/>
    </location>
    <ligand>
        <name>Zn(2+)</name>
        <dbReference type="ChEBI" id="CHEBI:29105"/>
        <note>catalytic</note>
    </ligand>
</feature>
<feature type="sequence conflict" description="In Ref. 1; BAA12479 and 2; AAA70043." evidence="2" ref="1 2">
    <original>D</original>
    <variation>N</variation>
    <location>
        <position position="93"/>
    </location>
</feature>
<organism>
    <name type="scientific">Bacillus subtilis (strain 168)</name>
    <dbReference type="NCBI Taxonomy" id="224308"/>
    <lineage>
        <taxon>Bacteria</taxon>
        <taxon>Bacillati</taxon>
        <taxon>Bacillota</taxon>
        <taxon>Bacilli</taxon>
        <taxon>Bacillales</taxon>
        <taxon>Bacillaceae</taxon>
        <taxon>Bacillus</taxon>
    </lineage>
</organism>
<protein>
    <recommendedName>
        <fullName evidence="1">Endoribonuclease YbeY</fullName>
        <ecNumber evidence="1">3.1.-.-</ecNumber>
    </recommendedName>
</protein>
<proteinExistence type="inferred from homology"/>
<evidence type="ECO:0000255" key="1">
    <source>
        <dbReference type="HAMAP-Rule" id="MF_00009"/>
    </source>
</evidence>
<evidence type="ECO:0000305" key="2"/>
<comment type="function">
    <text evidence="1">Single strand-specific metallo-endoribonuclease involved in late-stage 70S ribosome quality control and in maturation of the 3' terminus of the 16S rRNA.</text>
</comment>
<comment type="cofactor">
    <cofactor evidence="1">
        <name>Zn(2+)</name>
        <dbReference type="ChEBI" id="CHEBI:29105"/>
    </cofactor>
    <text evidence="1">Binds 1 zinc ion.</text>
</comment>
<comment type="subcellular location">
    <subcellularLocation>
        <location evidence="1">Cytoplasm</location>
    </subcellularLocation>
</comment>
<comment type="similarity">
    <text evidence="1">Belongs to the endoribonuclease YbeY family.</text>
</comment>
<comment type="sequence caution" evidence="2">
    <conflict type="frameshift">
        <sequence resource="EMBL-CDS" id="AAA70043"/>
    </conflict>
</comment>
<accession>P46347</accession>
<dbReference type="EC" id="3.1.-.-" evidence="1"/>
<dbReference type="EMBL" id="D84432">
    <property type="protein sequence ID" value="BAA12479.1"/>
    <property type="molecule type" value="Genomic_DNA"/>
</dbReference>
<dbReference type="EMBL" id="U29177">
    <property type="protein sequence ID" value="AAA70043.1"/>
    <property type="status" value="ALT_FRAME"/>
    <property type="molecule type" value="Genomic_DNA"/>
</dbReference>
<dbReference type="EMBL" id="AL009126">
    <property type="protein sequence ID" value="CAB14461.2"/>
    <property type="molecule type" value="Genomic_DNA"/>
</dbReference>
<dbReference type="PIR" id="F69953">
    <property type="entry name" value="F69953"/>
</dbReference>
<dbReference type="RefSeq" id="WP_003230039.1">
    <property type="nucleotide sequence ID" value="NZ_OZ025638.1"/>
</dbReference>
<dbReference type="SMR" id="P46347"/>
<dbReference type="FunCoup" id="P46347">
    <property type="interactions" value="462"/>
</dbReference>
<dbReference type="STRING" id="224308.BSU25320"/>
<dbReference type="jPOST" id="P46347"/>
<dbReference type="PaxDb" id="224308-BSU25320"/>
<dbReference type="EnsemblBacteria" id="CAB14461">
    <property type="protein sequence ID" value="CAB14461"/>
    <property type="gene ID" value="BSU_25320"/>
</dbReference>
<dbReference type="GeneID" id="937869"/>
<dbReference type="KEGG" id="bsu:BSU25320"/>
<dbReference type="PATRIC" id="fig|224308.179.peg.2752"/>
<dbReference type="eggNOG" id="COG0319">
    <property type="taxonomic scope" value="Bacteria"/>
</dbReference>
<dbReference type="InParanoid" id="P46347"/>
<dbReference type="OrthoDB" id="9807740at2"/>
<dbReference type="PhylomeDB" id="P46347"/>
<dbReference type="BioCyc" id="BSUB:BSU25320-MONOMER"/>
<dbReference type="Proteomes" id="UP000001570">
    <property type="component" value="Chromosome"/>
</dbReference>
<dbReference type="GO" id="GO:0005737">
    <property type="term" value="C:cytoplasm"/>
    <property type="evidence" value="ECO:0007669"/>
    <property type="project" value="UniProtKB-SubCell"/>
</dbReference>
<dbReference type="GO" id="GO:0004222">
    <property type="term" value="F:metalloendopeptidase activity"/>
    <property type="evidence" value="ECO:0007669"/>
    <property type="project" value="InterPro"/>
</dbReference>
<dbReference type="GO" id="GO:0004521">
    <property type="term" value="F:RNA endonuclease activity"/>
    <property type="evidence" value="ECO:0007669"/>
    <property type="project" value="UniProtKB-UniRule"/>
</dbReference>
<dbReference type="GO" id="GO:0008270">
    <property type="term" value="F:zinc ion binding"/>
    <property type="evidence" value="ECO:0007669"/>
    <property type="project" value="UniProtKB-UniRule"/>
</dbReference>
<dbReference type="GO" id="GO:0006364">
    <property type="term" value="P:rRNA processing"/>
    <property type="evidence" value="ECO:0007669"/>
    <property type="project" value="UniProtKB-UniRule"/>
</dbReference>
<dbReference type="Gene3D" id="3.40.390.30">
    <property type="entry name" value="Metalloproteases ('zincins'), catalytic domain"/>
    <property type="match status" value="1"/>
</dbReference>
<dbReference type="HAMAP" id="MF_00009">
    <property type="entry name" value="Endoribonucl_YbeY"/>
    <property type="match status" value="1"/>
</dbReference>
<dbReference type="InterPro" id="IPR023091">
    <property type="entry name" value="MetalPrtase_cat_dom_sf_prd"/>
</dbReference>
<dbReference type="InterPro" id="IPR002036">
    <property type="entry name" value="YbeY"/>
</dbReference>
<dbReference type="InterPro" id="IPR020549">
    <property type="entry name" value="YbeY_CS"/>
</dbReference>
<dbReference type="NCBIfam" id="TIGR00043">
    <property type="entry name" value="rRNA maturation RNase YbeY"/>
    <property type="match status" value="1"/>
</dbReference>
<dbReference type="PANTHER" id="PTHR46986">
    <property type="entry name" value="ENDORIBONUCLEASE YBEY, CHLOROPLASTIC"/>
    <property type="match status" value="1"/>
</dbReference>
<dbReference type="PANTHER" id="PTHR46986:SF1">
    <property type="entry name" value="ENDORIBONUCLEASE YBEY, CHLOROPLASTIC"/>
    <property type="match status" value="1"/>
</dbReference>
<dbReference type="Pfam" id="PF02130">
    <property type="entry name" value="YbeY"/>
    <property type="match status" value="1"/>
</dbReference>
<dbReference type="SUPFAM" id="SSF55486">
    <property type="entry name" value="Metalloproteases ('zincins'), catalytic domain"/>
    <property type="match status" value="1"/>
</dbReference>
<dbReference type="PROSITE" id="PS01306">
    <property type="entry name" value="UPF0054"/>
    <property type="match status" value="1"/>
</dbReference>
<reference key="1">
    <citation type="journal article" date="1996" name="Microbiology">
        <title>Systematic sequencing of the 283 kb 210 degrees-232 degrees region of the Bacillus subtilis genome containing the skin element and many sporulation genes.</title>
        <authorList>
            <person name="Mizuno M."/>
            <person name="Masuda S."/>
            <person name="Takemaru K."/>
            <person name="Hosono S."/>
            <person name="Sato T."/>
            <person name="Takeuchi M."/>
            <person name="Kobayashi Y."/>
        </authorList>
    </citation>
    <scope>NUCLEOTIDE SEQUENCE [GENOMIC DNA]</scope>
    <source>
        <strain>168 / JH642</strain>
    </source>
</reference>
<reference key="2">
    <citation type="submission" date="1995-07" db="EMBL/GenBank/DDBJ databases">
        <title>Nucleotide sequence upstream of the cdd locus in Bacillus subtilis.</title>
        <authorList>
            <person name="Kim K."/>
            <person name="Hwang S."/>
            <person name="Suh J."/>
            <person name="Song B.-H."/>
            <person name="Hong S."/>
            <person name="Kim J."/>
        </authorList>
    </citation>
    <scope>NUCLEOTIDE SEQUENCE [GENOMIC DNA]</scope>
    <source>
        <strain>ED40</strain>
    </source>
</reference>
<reference key="3">
    <citation type="journal article" date="1997" name="Nature">
        <title>The complete genome sequence of the Gram-positive bacterium Bacillus subtilis.</title>
        <authorList>
            <person name="Kunst F."/>
            <person name="Ogasawara N."/>
            <person name="Moszer I."/>
            <person name="Albertini A.M."/>
            <person name="Alloni G."/>
            <person name="Azevedo V."/>
            <person name="Bertero M.G."/>
            <person name="Bessieres P."/>
            <person name="Bolotin A."/>
            <person name="Borchert S."/>
            <person name="Borriss R."/>
            <person name="Boursier L."/>
            <person name="Brans A."/>
            <person name="Braun M."/>
            <person name="Brignell S.C."/>
            <person name="Bron S."/>
            <person name="Brouillet S."/>
            <person name="Bruschi C.V."/>
            <person name="Caldwell B."/>
            <person name="Capuano V."/>
            <person name="Carter N.M."/>
            <person name="Choi S.-K."/>
            <person name="Codani J.-J."/>
            <person name="Connerton I.F."/>
            <person name="Cummings N.J."/>
            <person name="Daniel R.A."/>
            <person name="Denizot F."/>
            <person name="Devine K.M."/>
            <person name="Duesterhoeft A."/>
            <person name="Ehrlich S.D."/>
            <person name="Emmerson P.T."/>
            <person name="Entian K.-D."/>
            <person name="Errington J."/>
            <person name="Fabret C."/>
            <person name="Ferrari E."/>
            <person name="Foulger D."/>
            <person name="Fritz C."/>
            <person name="Fujita M."/>
            <person name="Fujita Y."/>
            <person name="Fuma S."/>
            <person name="Galizzi A."/>
            <person name="Galleron N."/>
            <person name="Ghim S.-Y."/>
            <person name="Glaser P."/>
            <person name="Goffeau A."/>
            <person name="Golightly E.J."/>
            <person name="Grandi G."/>
            <person name="Guiseppi G."/>
            <person name="Guy B.J."/>
            <person name="Haga K."/>
            <person name="Haiech J."/>
            <person name="Harwood C.R."/>
            <person name="Henaut A."/>
            <person name="Hilbert H."/>
            <person name="Holsappel S."/>
            <person name="Hosono S."/>
            <person name="Hullo M.-F."/>
            <person name="Itaya M."/>
            <person name="Jones L.-M."/>
            <person name="Joris B."/>
            <person name="Karamata D."/>
            <person name="Kasahara Y."/>
            <person name="Klaerr-Blanchard M."/>
            <person name="Klein C."/>
            <person name="Kobayashi Y."/>
            <person name="Koetter P."/>
            <person name="Koningstein G."/>
            <person name="Krogh S."/>
            <person name="Kumano M."/>
            <person name="Kurita K."/>
            <person name="Lapidus A."/>
            <person name="Lardinois S."/>
            <person name="Lauber J."/>
            <person name="Lazarevic V."/>
            <person name="Lee S.-M."/>
            <person name="Levine A."/>
            <person name="Liu H."/>
            <person name="Masuda S."/>
            <person name="Mauel C."/>
            <person name="Medigue C."/>
            <person name="Medina N."/>
            <person name="Mellado R.P."/>
            <person name="Mizuno M."/>
            <person name="Moestl D."/>
            <person name="Nakai S."/>
            <person name="Noback M."/>
            <person name="Noone D."/>
            <person name="O'Reilly M."/>
            <person name="Ogawa K."/>
            <person name="Ogiwara A."/>
            <person name="Oudega B."/>
            <person name="Park S.-H."/>
            <person name="Parro V."/>
            <person name="Pohl T.M."/>
            <person name="Portetelle D."/>
            <person name="Porwollik S."/>
            <person name="Prescott A.M."/>
            <person name="Presecan E."/>
            <person name="Pujic P."/>
            <person name="Purnelle B."/>
            <person name="Rapoport G."/>
            <person name="Rey M."/>
            <person name="Reynolds S."/>
            <person name="Rieger M."/>
            <person name="Rivolta C."/>
            <person name="Rocha E."/>
            <person name="Roche B."/>
            <person name="Rose M."/>
            <person name="Sadaie Y."/>
            <person name="Sato T."/>
            <person name="Scanlan E."/>
            <person name="Schleich S."/>
            <person name="Schroeter R."/>
            <person name="Scoffone F."/>
            <person name="Sekiguchi J."/>
            <person name="Sekowska A."/>
            <person name="Seror S.J."/>
            <person name="Serror P."/>
            <person name="Shin B.-S."/>
            <person name="Soldo B."/>
            <person name="Sorokin A."/>
            <person name="Tacconi E."/>
            <person name="Takagi T."/>
            <person name="Takahashi H."/>
            <person name="Takemaru K."/>
            <person name="Takeuchi M."/>
            <person name="Tamakoshi A."/>
            <person name="Tanaka T."/>
            <person name="Terpstra P."/>
            <person name="Tognoni A."/>
            <person name="Tosato V."/>
            <person name="Uchiyama S."/>
            <person name="Vandenbol M."/>
            <person name="Vannier F."/>
            <person name="Vassarotti A."/>
            <person name="Viari A."/>
            <person name="Wambutt R."/>
            <person name="Wedler E."/>
            <person name="Wedler H."/>
            <person name="Weitzenegger T."/>
            <person name="Winters P."/>
            <person name="Wipat A."/>
            <person name="Yamamoto H."/>
            <person name="Yamane K."/>
            <person name="Yasumoto K."/>
            <person name="Yata K."/>
            <person name="Yoshida K."/>
            <person name="Yoshikawa H.-F."/>
            <person name="Zumstein E."/>
            <person name="Yoshikawa H."/>
            <person name="Danchin A."/>
        </authorList>
    </citation>
    <scope>NUCLEOTIDE SEQUENCE [LARGE SCALE GENOMIC DNA]</scope>
    <source>
        <strain>168</strain>
    </source>
</reference>
<reference key="4">
    <citation type="journal article" date="2009" name="Microbiology">
        <title>From a consortium sequence to a unified sequence: the Bacillus subtilis 168 reference genome a decade later.</title>
        <authorList>
            <person name="Barbe V."/>
            <person name="Cruveiller S."/>
            <person name="Kunst F."/>
            <person name="Lenoble P."/>
            <person name="Meurice G."/>
            <person name="Sekowska A."/>
            <person name="Vallenet D."/>
            <person name="Wang T."/>
            <person name="Moszer I."/>
            <person name="Medigue C."/>
            <person name="Danchin A."/>
        </authorList>
    </citation>
    <scope>SEQUENCE REVISION TO 93</scope>
</reference>
<keyword id="KW-0963">Cytoplasm</keyword>
<keyword id="KW-0255">Endonuclease</keyword>
<keyword id="KW-0378">Hydrolase</keyword>
<keyword id="KW-0479">Metal-binding</keyword>
<keyword id="KW-0540">Nuclease</keyword>
<keyword id="KW-1185">Reference proteome</keyword>
<keyword id="KW-0690">Ribosome biogenesis</keyword>
<keyword id="KW-0698">rRNA processing</keyword>
<keyword id="KW-0862">Zinc</keyword>
<name>YBEY_BACSU</name>